<protein>
    <recommendedName>
        <fullName evidence="1">Nucleoside diphosphate kinase</fullName>
        <shortName evidence="1">NDK</shortName>
        <shortName evidence="1">NDP kinase</shortName>
        <ecNumber evidence="1">2.7.4.6</ecNumber>
    </recommendedName>
    <alternativeName>
        <fullName evidence="1">Nucleoside-2-P kinase</fullName>
    </alternativeName>
</protein>
<comment type="function">
    <text evidence="1">Major role in the synthesis of nucleoside triphosphates other than ATP. The ATP gamma phosphate is transferred to the NDP beta phosphate via a ping-pong mechanism, using a phosphorylated active-site intermediate.</text>
</comment>
<comment type="catalytic activity">
    <reaction evidence="1">
        <text>a 2'-deoxyribonucleoside 5'-diphosphate + ATP = a 2'-deoxyribonucleoside 5'-triphosphate + ADP</text>
        <dbReference type="Rhea" id="RHEA:44640"/>
        <dbReference type="ChEBI" id="CHEBI:30616"/>
        <dbReference type="ChEBI" id="CHEBI:61560"/>
        <dbReference type="ChEBI" id="CHEBI:73316"/>
        <dbReference type="ChEBI" id="CHEBI:456216"/>
        <dbReference type="EC" id="2.7.4.6"/>
    </reaction>
</comment>
<comment type="catalytic activity">
    <reaction evidence="1">
        <text>a ribonucleoside 5'-diphosphate + ATP = a ribonucleoside 5'-triphosphate + ADP</text>
        <dbReference type="Rhea" id="RHEA:18113"/>
        <dbReference type="ChEBI" id="CHEBI:30616"/>
        <dbReference type="ChEBI" id="CHEBI:57930"/>
        <dbReference type="ChEBI" id="CHEBI:61557"/>
        <dbReference type="ChEBI" id="CHEBI:456216"/>
        <dbReference type="EC" id="2.7.4.6"/>
    </reaction>
</comment>
<comment type="cofactor">
    <cofactor evidence="1">
        <name>Mg(2+)</name>
        <dbReference type="ChEBI" id="CHEBI:18420"/>
    </cofactor>
</comment>
<comment type="subunit">
    <text evidence="1">Homotetramer.</text>
</comment>
<comment type="subcellular location">
    <subcellularLocation>
        <location evidence="1">Cytoplasm</location>
    </subcellularLocation>
</comment>
<comment type="similarity">
    <text evidence="1">Belongs to the NDK family.</text>
</comment>
<organism>
    <name type="scientific">Chlamydia abortus (strain DSM 27085 / S26/3)</name>
    <name type="common">Chlamydophila abortus</name>
    <dbReference type="NCBI Taxonomy" id="218497"/>
    <lineage>
        <taxon>Bacteria</taxon>
        <taxon>Pseudomonadati</taxon>
        <taxon>Chlamydiota</taxon>
        <taxon>Chlamydiia</taxon>
        <taxon>Chlamydiales</taxon>
        <taxon>Chlamydiaceae</taxon>
        <taxon>Chlamydia/Chlamydophila group</taxon>
        <taxon>Chlamydia</taxon>
    </lineage>
</organism>
<keyword id="KW-0067">ATP-binding</keyword>
<keyword id="KW-0963">Cytoplasm</keyword>
<keyword id="KW-0418">Kinase</keyword>
<keyword id="KW-0460">Magnesium</keyword>
<keyword id="KW-0479">Metal-binding</keyword>
<keyword id="KW-0546">Nucleotide metabolism</keyword>
<keyword id="KW-0547">Nucleotide-binding</keyword>
<keyword id="KW-0597">Phosphoprotein</keyword>
<keyword id="KW-0808">Transferase</keyword>
<name>NDK_CHLAB</name>
<dbReference type="EC" id="2.7.4.6" evidence="1"/>
<dbReference type="EMBL" id="CR848038">
    <property type="protein sequence ID" value="CAH63578.1"/>
    <property type="molecule type" value="Genomic_DNA"/>
</dbReference>
<dbReference type="RefSeq" id="WP_006343788.1">
    <property type="nucleotide sequence ID" value="NC_004552.2"/>
</dbReference>
<dbReference type="SMR" id="Q5L6Z2"/>
<dbReference type="GeneID" id="93024668"/>
<dbReference type="KEGG" id="cab:CAB120"/>
<dbReference type="eggNOG" id="COG0105">
    <property type="taxonomic scope" value="Bacteria"/>
</dbReference>
<dbReference type="HOGENOM" id="CLU_060216_8_1_0"/>
<dbReference type="OrthoDB" id="9801161at2"/>
<dbReference type="Proteomes" id="UP000001012">
    <property type="component" value="Chromosome"/>
</dbReference>
<dbReference type="GO" id="GO:0005737">
    <property type="term" value="C:cytoplasm"/>
    <property type="evidence" value="ECO:0007669"/>
    <property type="project" value="UniProtKB-SubCell"/>
</dbReference>
<dbReference type="GO" id="GO:0005524">
    <property type="term" value="F:ATP binding"/>
    <property type="evidence" value="ECO:0007669"/>
    <property type="project" value="UniProtKB-UniRule"/>
</dbReference>
<dbReference type="GO" id="GO:0046872">
    <property type="term" value="F:metal ion binding"/>
    <property type="evidence" value="ECO:0007669"/>
    <property type="project" value="UniProtKB-KW"/>
</dbReference>
<dbReference type="GO" id="GO:0004550">
    <property type="term" value="F:nucleoside diphosphate kinase activity"/>
    <property type="evidence" value="ECO:0007669"/>
    <property type="project" value="UniProtKB-UniRule"/>
</dbReference>
<dbReference type="GO" id="GO:0006241">
    <property type="term" value="P:CTP biosynthetic process"/>
    <property type="evidence" value="ECO:0007669"/>
    <property type="project" value="UniProtKB-UniRule"/>
</dbReference>
<dbReference type="GO" id="GO:0006183">
    <property type="term" value="P:GTP biosynthetic process"/>
    <property type="evidence" value="ECO:0007669"/>
    <property type="project" value="UniProtKB-UniRule"/>
</dbReference>
<dbReference type="GO" id="GO:0006228">
    <property type="term" value="P:UTP biosynthetic process"/>
    <property type="evidence" value="ECO:0007669"/>
    <property type="project" value="UniProtKB-UniRule"/>
</dbReference>
<dbReference type="CDD" id="cd04413">
    <property type="entry name" value="NDPk_I"/>
    <property type="match status" value="1"/>
</dbReference>
<dbReference type="FunFam" id="3.30.70.141:FF:000001">
    <property type="entry name" value="Nucleoside diphosphate kinase"/>
    <property type="match status" value="1"/>
</dbReference>
<dbReference type="Gene3D" id="3.30.70.141">
    <property type="entry name" value="Nucleoside diphosphate kinase-like domain"/>
    <property type="match status" value="1"/>
</dbReference>
<dbReference type="HAMAP" id="MF_00451">
    <property type="entry name" value="NDP_kinase"/>
    <property type="match status" value="1"/>
</dbReference>
<dbReference type="InterPro" id="IPR034907">
    <property type="entry name" value="NDK-like_dom"/>
</dbReference>
<dbReference type="InterPro" id="IPR036850">
    <property type="entry name" value="NDK-like_dom_sf"/>
</dbReference>
<dbReference type="InterPro" id="IPR001564">
    <property type="entry name" value="Nucleoside_diP_kinase"/>
</dbReference>
<dbReference type="InterPro" id="IPR023005">
    <property type="entry name" value="Nucleoside_diP_kinase_AS"/>
</dbReference>
<dbReference type="NCBIfam" id="NF001908">
    <property type="entry name" value="PRK00668.1"/>
    <property type="match status" value="1"/>
</dbReference>
<dbReference type="PANTHER" id="PTHR46161">
    <property type="entry name" value="NUCLEOSIDE DIPHOSPHATE KINASE"/>
    <property type="match status" value="1"/>
</dbReference>
<dbReference type="PANTHER" id="PTHR46161:SF3">
    <property type="entry name" value="NUCLEOSIDE DIPHOSPHATE KINASE DDB_G0292928-RELATED"/>
    <property type="match status" value="1"/>
</dbReference>
<dbReference type="Pfam" id="PF00334">
    <property type="entry name" value="NDK"/>
    <property type="match status" value="1"/>
</dbReference>
<dbReference type="PRINTS" id="PR01243">
    <property type="entry name" value="NUCDPKINASE"/>
</dbReference>
<dbReference type="SMART" id="SM00562">
    <property type="entry name" value="NDK"/>
    <property type="match status" value="1"/>
</dbReference>
<dbReference type="SUPFAM" id="SSF54919">
    <property type="entry name" value="Nucleoside diphosphate kinase, NDK"/>
    <property type="match status" value="1"/>
</dbReference>
<dbReference type="PROSITE" id="PS00469">
    <property type="entry name" value="NDPK"/>
    <property type="match status" value="1"/>
</dbReference>
<dbReference type="PROSITE" id="PS51374">
    <property type="entry name" value="NDPK_LIKE"/>
    <property type="match status" value="1"/>
</dbReference>
<evidence type="ECO:0000255" key="1">
    <source>
        <dbReference type="HAMAP-Rule" id="MF_00451"/>
    </source>
</evidence>
<accession>Q5L6Z2</accession>
<reference key="1">
    <citation type="journal article" date="2005" name="Genome Res.">
        <title>The Chlamydophila abortus genome sequence reveals an array of variable proteins that contribute to interspecies variation.</title>
        <authorList>
            <person name="Thomson N.R."/>
            <person name="Yeats C."/>
            <person name="Bell K."/>
            <person name="Holden M.T.G."/>
            <person name="Bentley S.D."/>
            <person name="Livingstone M."/>
            <person name="Cerdeno-Tarraga A.-M."/>
            <person name="Harris B."/>
            <person name="Doggett J."/>
            <person name="Ormond D."/>
            <person name="Mungall K."/>
            <person name="Clarke K."/>
            <person name="Feltwell T."/>
            <person name="Hance Z."/>
            <person name="Sanders M."/>
            <person name="Quail M.A."/>
            <person name="Price C."/>
            <person name="Barrell B.G."/>
            <person name="Parkhill J."/>
            <person name="Longbottom D."/>
        </authorList>
    </citation>
    <scope>NUCLEOTIDE SEQUENCE [LARGE SCALE GENOMIC DNA]</scope>
    <source>
        <strain>DSM 27085 / S26/3</strain>
    </source>
</reference>
<proteinExistence type="inferred from homology"/>
<gene>
    <name evidence="1" type="primary">ndk</name>
    <name type="ordered locus">CAB120</name>
</gene>
<feature type="chain" id="PRO_0000136963" description="Nucleoside diphosphate kinase">
    <location>
        <begin position="1"/>
        <end position="141"/>
    </location>
</feature>
<feature type="active site" description="Pros-phosphohistidine intermediate" evidence="1">
    <location>
        <position position="115"/>
    </location>
</feature>
<feature type="binding site" evidence="1">
    <location>
        <position position="9"/>
    </location>
    <ligand>
        <name>ATP</name>
        <dbReference type="ChEBI" id="CHEBI:30616"/>
    </ligand>
</feature>
<feature type="binding site" evidence="1">
    <location>
        <position position="57"/>
    </location>
    <ligand>
        <name>ATP</name>
        <dbReference type="ChEBI" id="CHEBI:30616"/>
    </ligand>
</feature>
<feature type="binding site" evidence="1">
    <location>
        <position position="85"/>
    </location>
    <ligand>
        <name>ATP</name>
        <dbReference type="ChEBI" id="CHEBI:30616"/>
    </ligand>
</feature>
<feature type="binding site" evidence="1">
    <location>
        <position position="91"/>
    </location>
    <ligand>
        <name>ATP</name>
        <dbReference type="ChEBI" id="CHEBI:30616"/>
    </ligand>
</feature>
<feature type="binding site" evidence="1">
    <location>
        <position position="102"/>
    </location>
    <ligand>
        <name>ATP</name>
        <dbReference type="ChEBI" id="CHEBI:30616"/>
    </ligand>
</feature>
<feature type="binding site" evidence="1">
    <location>
        <position position="112"/>
    </location>
    <ligand>
        <name>ATP</name>
        <dbReference type="ChEBI" id="CHEBI:30616"/>
    </ligand>
</feature>
<sequence>MEQTLSIIKPDSVGKAHIGEIIAIFEKSGFRIAAMKMLHLSVKEAEGFYAVHKSRPFFQELVDFMISGPVVVMVLEGNNAVARNREIMGATNPQEAAPGTIRAQFGESIGINAVHGSDSLENAAIEINYFFSKVEIVNSAA</sequence>